<comment type="similarity">
    <text evidence="1">Belongs to the glycosyltransferase group 1 family.</text>
</comment>
<accession>Q25BG4</accession>
<gene>
    <name type="ORF">ORF31</name>
</gene>
<keyword id="KW-0328">Glycosyltransferase</keyword>
<keyword id="KW-1185">Reference proteome</keyword>
<keyword id="KW-0808">Transferase</keyword>
<name>GT031_HIS1I</name>
<dbReference type="EC" id="2.4.-.-"/>
<dbReference type="EMBL" id="AF191796">
    <property type="protein sequence ID" value="AAQ13755.1"/>
    <property type="molecule type" value="Genomic_DNA"/>
</dbReference>
<dbReference type="RefSeq" id="YP_529543.1">
    <property type="nucleotide sequence ID" value="NC_007914.1"/>
</dbReference>
<dbReference type="SMR" id="Q25BG4"/>
<dbReference type="KEGG" id="vg:5142396"/>
<dbReference type="Proteomes" id="UP000007024">
    <property type="component" value="Segment"/>
</dbReference>
<dbReference type="GO" id="GO:0016757">
    <property type="term" value="F:glycosyltransferase activity"/>
    <property type="evidence" value="ECO:0007669"/>
    <property type="project" value="UniProtKB-KW"/>
</dbReference>
<dbReference type="Gene3D" id="3.40.50.2000">
    <property type="entry name" value="Glycogen Phosphorylase B"/>
    <property type="match status" value="2"/>
</dbReference>
<dbReference type="Pfam" id="PF13692">
    <property type="entry name" value="Glyco_trans_1_4"/>
    <property type="match status" value="1"/>
</dbReference>
<dbReference type="SUPFAM" id="SSF53756">
    <property type="entry name" value="UDP-Glycosyltransferase/glycogen phosphorylase"/>
    <property type="match status" value="1"/>
</dbReference>
<organismHost>
    <name type="scientific">Haloarcula hispanica</name>
    <dbReference type="NCBI Taxonomy" id="51589"/>
</organismHost>
<proteinExistence type="inferred from homology"/>
<reference key="1">
    <citation type="journal article" date="2006" name="Virology">
        <title>His1 and His2 are distantly related, spindle-shaped haloviruses belonging to the novel virus group, Salterprovirus.</title>
        <authorList>
            <person name="Bath C."/>
            <person name="Cukalac T."/>
            <person name="Porter K."/>
            <person name="Dyall-Smith M.L."/>
        </authorList>
    </citation>
    <scope>NUCLEOTIDE SEQUENCE [GENOMIC DNA]</scope>
</reference>
<organism>
    <name type="scientific">His1 virus (isolate Australia/Victoria)</name>
    <name type="common">His1V</name>
    <name type="synonym">Haloarcula hispanica virus 1</name>
    <dbReference type="NCBI Taxonomy" id="654912"/>
    <lineage>
        <taxon>Viruses</taxon>
        <taxon>Viruses incertae sedis</taxon>
        <taxon>Halspiviridae</taxon>
        <taxon>Salterprovirus</taxon>
        <taxon>Salterprovirus His1</taxon>
    </lineage>
</organism>
<evidence type="ECO:0000305" key="1"/>
<sequence length="314" mass="35467">MSGRDISVAIQYPGSRVNRITYPLSKTNIEYEVSADNPFDFDIVLLDCPGLNVLKPLAKAKFSSVPVVYRVQGDVLRAFQEMNYTNFKYRSAKYLFSHLDGAIPIEPVLGRRFSNVTGVRNIGTATLAKSEKYWPNAKHWDESLRLISVTNVNYIGKVQPMVDYAPYISRFLQRNGGHWNIYGKGRLAGYLQDNLGGYDNISYCGYAEDIKSRYANSNCMLHLSNFDSLPNAILEGFASNLPVITNPFSVFSDYHGPIEVTELKKIDAKLCSMQDPTTRRIKARQGQEYLKAKHTPEIVGEQYSVVFRSVLNDC</sequence>
<feature type="chain" id="PRO_0000384871" description="Putative glycosyltransferase ORF31">
    <location>
        <begin position="1"/>
        <end position="314"/>
    </location>
</feature>
<protein>
    <recommendedName>
        <fullName>Putative glycosyltransferase ORF31</fullName>
        <ecNumber>2.4.-.-</ecNumber>
    </recommendedName>
</protein>